<gene>
    <name evidence="1" type="primary">dnaT</name>
    <name type="ordered locus">ECIAI39_4835</name>
</gene>
<proteinExistence type="inferred from homology"/>
<comment type="function">
    <text evidence="1">Involved in the restart of stalled replication forks, which reloads the replicative helicase on sites other than the origin of replication. Can function in multiple replication restart pathways. Displaces ssDNA from a PriB-ssDNA complex. Probably forms a spiral filament on ssDNA.</text>
</comment>
<comment type="subunit">
    <text evidence="1">Homooligomerizes. Interacts with PriB. Component of the replication restart primosome. Primosome assembly occurs via a 'hand-off' mechanism. PriA binds to replication forks, subsequently PriB then DnaT bind; DnaT then displaces ssDNA to generate the helicase loading substrate.</text>
</comment>
<comment type="similarity">
    <text evidence="1">Belongs to the DnaT family.</text>
</comment>
<evidence type="ECO:0000255" key="1">
    <source>
        <dbReference type="HAMAP-Rule" id="MF_01061"/>
    </source>
</evidence>
<evidence type="ECO:0000256" key="2">
    <source>
        <dbReference type="SAM" id="MobiDB-lite"/>
    </source>
</evidence>
<organism>
    <name type="scientific">Escherichia coli O7:K1 (strain IAI39 / ExPEC)</name>
    <dbReference type="NCBI Taxonomy" id="585057"/>
    <lineage>
        <taxon>Bacteria</taxon>
        <taxon>Pseudomonadati</taxon>
        <taxon>Pseudomonadota</taxon>
        <taxon>Gammaproteobacteria</taxon>
        <taxon>Enterobacterales</taxon>
        <taxon>Enterobacteriaceae</taxon>
        <taxon>Escherichia</taxon>
    </lineage>
</organism>
<feature type="chain" id="PRO_1000136431" description="Replication restart protein DnaT">
    <location>
        <begin position="1"/>
        <end position="179"/>
    </location>
</feature>
<feature type="region of interest" description="Disordered" evidence="2">
    <location>
        <begin position="156"/>
        <end position="179"/>
    </location>
</feature>
<dbReference type="EMBL" id="CU928164">
    <property type="protein sequence ID" value="CAR20932.1"/>
    <property type="molecule type" value="Genomic_DNA"/>
</dbReference>
<dbReference type="RefSeq" id="WP_001298056.1">
    <property type="nucleotide sequence ID" value="NC_011750.1"/>
</dbReference>
<dbReference type="RefSeq" id="YP_002410685.1">
    <property type="nucleotide sequence ID" value="NC_011750.1"/>
</dbReference>
<dbReference type="SMR" id="B7NVD2"/>
<dbReference type="STRING" id="585057.ECIAI39_4835"/>
<dbReference type="KEGG" id="ect:ECIAI39_4835"/>
<dbReference type="PATRIC" id="fig|585057.6.peg.4994"/>
<dbReference type="HOGENOM" id="CLU_1501592_0_0_6"/>
<dbReference type="Proteomes" id="UP000000749">
    <property type="component" value="Chromosome"/>
</dbReference>
<dbReference type="GO" id="GO:1990077">
    <property type="term" value="C:primosome complex"/>
    <property type="evidence" value="ECO:0007669"/>
    <property type="project" value="UniProtKB-KW"/>
</dbReference>
<dbReference type="GO" id="GO:0006269">
    <property type="term" value="P:DNA replication, synthesis of primer"/>
    <property type="evidence" value="ECO:0007669"/>
    <property type="project" value="UniProtKB-UniRule"/>
</dbReference>
<dbReference type="Gene3D" id="1.10.8.1180">
    <property type="match status" value="1"/>
</dbReference>
<dbReference type="HAMAP" id="MF_01061">
    <property type="entry name" value="DnaT"/>
    <property type="match status" value="1"/>
</dbReference>
<dbReference type="InterPro" id="IPR020917">
    <property type="entry name" value="DnaT"/>
</dbReference>
<dbReference type="InterPro" id="IPR040480">
    <property type="entry name" value="DnaT_DNA_bind"/>
</dbReference>
<dbReference type="NCBIfam" id="NF002770">
    <property type="entry name" value="PRK02854.1"/>
    <property type="match status" value="1"/>
</dbReference>
<dbReference type="Pfam" id="PF17948">
    <property type="entry name" value="DnaT"/>
    <property type="match status" value="1"/>
</dbReference>
<protein>
    <recommendedName>
        <fullName evidence="1">Replication restart protein DnaT</fullName>
    </recommendedName>
</protein>
<sequence length="179" mass="19469">MSSRVLTPDVVGIDALVHDHQTVLAKAEGGVVAVFANNAPAFYAITPARLAELLALEEKLARPGSDVALDDQLYQEPQTAPVAVPMGKFAMYPDWQPDADFIRLAALWGVALREPVTAEELASFIAYWQAEGKVFHHVQWQQKLARSLQIGRASNGGLPKRDVNTVSEPDSQIPPGFRG</sequence>
<accession>B7NVD2</accession>
<keyword id="KW-0235">DNA replication</keyword>
<keyword id="KW-0238">DNA-binding</keyword>
<keyword id="KW-0639">Primosome</keyword>
<name>DNAT_ECO7I</name>
<reference key="1">
    <citation type="journal article" date="2009" name="PLoS Genet.">
        <title>Organised genome dynamics in the Escherichia coli species results in highly diverse adaptive paths.</title>
        <authorList>
            <person name="Touchon M."/>
            <person name="Hoede C."/>
            <person name="Tenaillon O."/>
            <person name="Barbe V."/>
            <person name="Baeriswyl S."/>
            <person name="Bidet P."/>
            <person name="Bingen E."/>
            <person name="Bonacorsi S."/>
            <person name="Bouchier C."/>
            <person name="Bouvet O."/>
            <person name="Calteau A."/>
            <person name="Chiapello H."/>
            <person name="Clermont O."/>
            <person name="Cruveiller S."/>
            <person name="Danchin A."/>
            <person name="Diard M."/>
            <person name="Dossat C."/>
            <person name="Karoui M.E."/>
            <person name="Frapy E."/>
            <person name="Garry L."/>
            <person name="Ghigo J.M."/>
            <person name="Gilles A.M."/>
            <person name="Johnson J."/>
            <person name="Le Bouguenec C."/>
            <person name="Lescat M."/>
            <person name="Mangenot S."/>
            <person name="Martinez-Jehanne V."/>
            <person name="Matic I."/>
            <person name="Nassif X."/>
            <person name="Oztas S."/>
            <person name="Petit M.A."/>
            <person name="Pichon C."/>
            <person name="Rouy Z."/>
            <person name="Ruf C.S."/>
            <person name="Schneider D."/>
            <person name="Tourret J."/>
            <person name="Vacherie B."/>
            <person name="Vallenet D."/>
            <person name="Medigue C."/>
            <person name="Rocha E.P.C."/>
            <person name="Denamur E."/>
        </authorList>
    </citation>
    <scope>NUCLEOTIDE SEQUENCE [LARGE SCALE GENOMIC DNA]</scope>
    <source>
        <strain>IAI39 / ExPEC</strain>
    </source>
</reference>